<sequence length="554" mass="62897">MPTININKVDLERLSNISLSDKMIEDRFPMMGVEVEEIFEEVDKNGKKQNMVQFSINPDRPDYLSVEGLARGFRGFMGINTGIQEFEVLNSNIKVTVEENKTRPYVAFALVKNVLMDELVLESMINLQEKLHWAIGRDRKKLAIGIHDFDKVKAPFTYKEIRGDEIKFVPLGYEDEEMTPREIIEKHEKGIKYAHLIQDDKFPVIVDLNGEVLSMPPIINGTLTKVTPTSKNLLIDITGTEKEAVEETLNIIVCALAERRGTIVSVDVNGKKYPDLTPKSRMISVESINKKLGLNLNPGEIIQAVKKSGMDALYEDGNLIVKIPAYRNDILHNVDLKEEIAINYGYEKFEGKLPSVATTGSKDSVEKKCSAMSDLMIGLGFYEVMNLTLSNQDTLFEKMNLEVEEKDYIEVLKPASIEHRVLRTSILPLLLETLYINKHHSLPQKIFEIGDCVIIDENDTETDTKCKNIKKIAGAITHPLTNFNEIKSSTGALLREFFEDFEFENYEHPAFIPGRCAKIIKDRKEVGFFGEIHPEVILNFELEHPIVGFEITIE</sequence>
<proteinExistence type="inferred from homology"/>
<gene>
    <name evidence="1" type="primary">pheT</name>
    <name type="ordered locus">MmarC6_1418</name>
</gene>
<evidence type="ECO:0000255" key="1">
    <source>
        <dbReference type="HAMAP-Rule" id="MF_00284"/>
    </source>
</evidence>
<protein>
    <recommendedName>
        <fullName evidence="1">Phenylalanine--tRNA ligase beta subunit</fullName>
        <ecNumber evidence="1">6.1.1.20</ecNumber>
    </recommendedName>
    <alternativeName>
        <fullName evidence="1">Phenylalanyl-tRNA synthetase beta subunit</fullName>
        <shortName evidence="1">PheRS</shortName>
    </alternativeName>
</protein>
<name>SYFB_METM6</name>
<feature type="chain" id="PRO_1000114945" description="Phenylalanine--tRNA ligase beta subunit">
    <location>
        <begin position="1"/>
        <end position="554"/>
    </location>
</feature>
<feature type="domain" description="B5" evidence="1">
    <location>
        <begin position="276"/>
        <end position="351"/>
    </location>
</feature>
<feature type="binding site" evidence="1">
    <location>
        <position position="329"/>
    </location>
    <ligand>
        <name>Mg(2+)</name>
        <dbReference type="ChEBI" id="CHEBI:18420"/>
        <note>shared with alpha subunit</note>
    </ligand>
</feature>
<feature type="binding site" evidence="1">
    <location>
        <position position="335"/>
    </location>
    <ligand>
        <name>Mg(2+)</name>
        <dbReference type="ChEBI" id="CHEBI:18420"/>
        <note>shared with alpha subunit</note>
    </ligand>
</feature>
<feature type="binding site" evidence="1">
    <location>
        <position position="338"/>
    </location>
    <ligand>
        <name>Mg(2+)</name>
        <dbReference type="ChEBI" id="CHEBI:18420"/>
        <note>shared with alpha subunit</note>
    </ligand>
</feature>
<feature type="binding site" evidence="1">
    <location>
        <position position="339"/>
    </location>
    <ligand>
        <name>Mg(2+)</name>
        <dbReference type="ChEBI" id="CHEBI:18420"/>
        <note>shared with alpha subunit</note>
    </ligand>
</feature>
<keyword id="KW-0030">Aminoacyl-tRNA synthetase</keyword>
<keyword id="KW-0067">ATP-binding</keyword>
<keyword id="KW-0963">Cytoplasm</keyword>
<keyword id="KW-0436">Ligase</keyword>
<keyword id="KW-0460">Magnesium</keyword>
<keyword id="KW-0479">Metal-binding</keyword>
<keyword id="KW-0547">Nucleotide-binding</keyword>
<keyword id="KW-0648">Protein biosynthesis</keyword>
<reference key="1">
    <citation type="submission" date="2007-10" db="EMBL/GenBank/DDBJ databases">
        <title>Complete sequence of Methanococcus maripaludis C6.</title>
        <authorList>
            <consortium name="US DOE Joint Genome Institute"/>
            <person name="Copeland A."/>
            <person name="Lucas S."/>
            <person name="Lapidus A."/>
            <person name="Barry K."/>
            <person name="Glavina del Rio T."/>
            <person name="Dalin E."/>
            <person name="Tice H."/>
            <person name="Pitluck S."/>
            <person name="Clum A."/>
            <person name="Schmutz J."/>
            <person name="Larimer F."/>
            <person name="Land M."/>
            <person name="Hauser L."/>
            <person name="Kyrpides N."/>
            <person name="Mikhailova N."/>
            <person name="Sieprawska-Lupa M."/>
            <person name="Whitman W.B."/>
            <person name="Richardson P."/>
        </authorList>
    </citation>
    <scope>NUCLEOTIDE SEQUENCE [LARGE SCALE GENOMIC DNA]</scope>
    <source>
        <strain>C6 / ATCC BAA-1332</strain>
    </source>
</reference>
<accession>A9AA58</accession>
<dbReference type="EC" id="6.1.1.20" evidence="1"/>
<dbReference type="EMBL" id="CP000867">
    <property type="protein sequence ID" value="ABX02231.1"/>
    <property type="molecule type" value="Genomic_DNA"/>
</dbReference>
<dbReference type="SMR" id="A9AA58"/>
<dbReference type="STRING" id="444158.MmarC6_1418"/>
<dbReference type="KEGG" id="mmx:MmarC6_1418"/>
<dbReference type="eggNOG" id="arCOG00412">
    <property type="taxonomic scope" value="Archaea"/>
</dbReference>
<dbReference type="HOGENOM" id="CLU_020279_3_0_2"/>
<dbReference type="OrthoDB" id="10073at2157"/>
<dbReference type="PhylomeDB" id="A9AA58"/>
<dbReference type="GO" id="GO:0009328">
    <property type="term" value="C:phenylalanine-tRNA ligase complex"/>
    <property type="evidence" value="ECO:0007669"/>
    <property type="project" value="TreeGrafter"/>
</dbReference>
<dbReference type="GO" id="GO:0005524">
    <property type="term" value="F:ATP binding"/>
    <property type="evidence" value="ECO:0007669"/>
    <property type="project" value="UniProtKB-UniRule"/>
</dbReference>
<dbReference type="GO" id="GO:0000287">
    <property type="term" value="F:magnesium ion binding"/>
    <property type="evidence" value="ECO:0007669"/>
    <property type="project" value="InterPro"/>
</dbReference>
<dbReference type="GO" id="GO:0004826">
    <property type="term" value="F:phenylalanine-tRNA ligase activity"/>
    <property type="evidence" value="ECO:0007669"/>
    <property type="project" value="UniProtKB-UniRule"/>
</dbReference>
<dbReference type="GO" id="GO:0003723">
    <property type="term" value="F:RNA binding"/>
    <property type="evidence" value="ECO:0007669"/>
    <property type="project" value="InterPro"/>
</dbReference>
<dbReference type="GO" id="GO:0006432">
    <property type="term" value="P:phenylalanyl-tRNA aminoacylation"/>
    <property type="evidence" value="ECO:0007669"/>
    <property type="project" value="UniProtKB-UniRule"/>
</dbReference>
<dbReference type="CDD" id="cd00769">
    <property type="entry name" value="PheRS_beta_core"/>
    <property type="match status" value="1"/>
</dbReference>
<dbReference type="FunFam" id="3.50.40.10:FF:000003">
    <property type="entry name" value="Phenylalanine--tRNA ligase beta subunit"/>
    <property type="match status" value="1"/>
</dbReference>
<dbReference type="Gene3D" id="3.30.56.10">
    <property type="match status" value="2"/>
</dbReference>
<dbReference type="Gene3D" id="3.30.930.10">
    <property type="entry name" value="Bira Bifunctional Protein, Domain 2"/>
    <property type="match status" value="1"/>
</dbReference>
<dbReference type="Gene3D" id="3.50.40.10">
    <property type="entry name" value="Phenylalanyl-trna Synthetase, Chain B, domain 3"/>
    <property type="match status" value="1"/>
</dbReference>
<dbReference type="HAMAP" id="MF_00284">
    <property type="entry name" value="Phe_tRNA_synth_beta2"/>
    <property type="match status" value="1"/>
</dbReference>
<dbReference type="InterPro" id="IPR045864">
    <property type="entry name" value="aa-tRNA-synth_II/BPL/LPL"/>
</dbReference>
<dbReference type="InterPro" id="IPR005146">
    <property type="entry name" value="B3/B4_tRNA-bd"/>
</dbReference>
<dbReference type="InterPro" id="IPR009061">
    <property type="entry name" value="DNA-bd_dom_put_sf"/>
</dbReference>
<dbReference type="InterPro" id="IPR045060">
    <property type="entry name" value="Phe-tRNA-ligase_IIc_bsu"/>
</dbReference>
<dbReference type="InterPro" id="IPR004531">
    <property type="entry name" value="Phe-tRNA-synth_IIc_bsu_arc_euk"/>
</dbReference>
<dbReference type="InterPro" id="IPR020825">
    <property type="entry name" value="Phe-tRNA_synthase-like_B3/B4"/>
</dbReference>
<dbReference type="InterPro" id="IPR022918">
    <property type="entry name" value="Phe_tRNA_ligase_beta2_arc"/>
</dbReference>
<dbReference type="InterPro" id="IPR041616">
    <property type="entry name" value="PheRS_beta_core"/>
</dbReference>
<dbReference type="InterPro" id="IPR040659">
    <property type="entry name" value="PhetRS_B1"/>
</dbReference>
<dbReference type="InterPro" id="IPR005147">
    <property type="entry name" value="tRNA_synthase_B5-dom"/>
</dbReference>
<dbReference type="NCBIfam" id="TIGR00471">
    <property type="entry name" value="pheT_arch"/>
    <property type="match status" value="1"/>
</dbReference>
<dbReference type="PANTHER" id="PTHR10947:SF0">
    <property type="entry name" value="PHENYLALANINE--TRNA LIGASE BETA SUBUNIT"/>
    <property type="match status" value="1"/>
</dbReference>
<dbReference type="PANTHER" id="PTHR10947">
    <property type="entry name" value="PHENYLALANYL-TRNA SYNTHETASE BETA CHAIN AND LEUCINE-RICH REPEAT-CONTAINING PROTEIN 47"/>
    <property type="match status" value="1"/>
</dbReference>
<dbReference type="Pfam" id="PF03483">
    <property type="entry name" value="B3_4"/>
    <property type="match status" value="1"/>
</dbReference>
<dbReference type="Pfam" id="PF03484">
    <property type="entry name" value="B5"/>
    <property type="match status" value="1"/>
</dbReference>
<dbReference type="Pfam" id="PF18262">
    <property type="entry name" value="PhetRS_B1"/>
    <property type="match status" value="1"/>
</dbReference>
<dbReference type="Pfam" id="PF17759">
    <property type="entry name" value="tRNA_synthFbeta"/>
    <property type="match status" value="1"/>
</dbReference>
<dbReference type="SMART" id="SM00873">
    <property type="entry name" value="B3_4"/>
    <property type="match status" value="1"/>
</dbReference>
<dbReference type="SMART" id="SM00874">
    <property type="entry name" value="B5"/>
    <property type="match status" value="1"/>
</dbReference>
<dbReference type="SUPFAM" id="SSF55681">
    <property type="entry name" value="Class II aaRS and biotin synthetases"/>
    <property type="match status" value="1"/>
</dbReference>
<dbReference type="SUPFAM" id="SSF46955">
    <property type="entry name" value="Putative DNA-binding domain"/>
    <property type="match status" value="2"/>
</dbReference>
<dbReference type="PROSITE" id="PS51483">
    <property type="entry name" value="B5"/>
    <property type="match status" value="1"/>
</dbReference>
<organism>
    <name type="scientific">Methanococcus maripaludis (strain C6 / ATCC BAA-1332)</name>
    <dbReference type="NCBI Taxonomy" id="444158"/>
    <lineage>
        <taxon>Archaea</taxon>
        <taxon>Methanobacteriati</taxon>
        <taxon>Methanobacteriota</taxon>
        <taxon>Methanomada group</taxon>
        <taxon>Methanococci</taxon>
        <taxon>Methanococcales</taxon>
        <taxon>Methanococcaceae</taxon>
        <taxon>Methanococcus</taxon>
    </lineage>
</organism>
<comment type="catalytic activity">
    <reaction evidence="1">
        <text>tRNA(Phe) + L-phenylalanine + ATP = L-phenylalanyl-tRNA(Phe) + AMP + diphosphate + H(+)</text>
        <dbReference type="Rhea" id="RHEA:19413"/>
        <dbReference type="Rhea" id="RHEA-COMP:9668"/>
        <dbReference type="Rhea" id="RHEA-COMP:9699"/>
        <dbReference type="ChEBI" id="CHEBI:15378"/>
        <dbReference type="ChEBI" id="CHEBI:30616"/>
        <dbReference type="ChEBI" id="CHEBI:33019"/>
        <dbReference type="ChEBI" id="CHEBI:58095"/>
        <dbReference type="ChEBI" id="CHEBI:78442"/>
        <dbReference type="ChEBI" id="CHEBI:78531"/>
        <dbReference type="ChEBI" id="CHEBI:456215"/>
        <dbReference type="EC" id="6.1.1.20"/>
    </reaction>
</comment>
<comment type="cofactor">
    <cofactor evidence="1">
        <name>Mg(2+)</name>
        <dbReference type="ChEBI" id="CHEBI:18420"/>
    </cofactor>
</comment>
<comment type="subunit">
    <text evidence="1">Tetramer of two alpha and two beta subunits.</text>
</comment>
<comment type="subcellular location">
    <subcellularLocation>
        <location evidence="1">Cytoplasm</location>
    </subcellularLocation>
</comment>
<comment type="similarity">
    <text evidence="1">Belongs to the phenylalanyl-tRNA synthetase beta subunit family. Type 2 subfamily.</text>
</comment>